<dbReference type="EC" id="7.1.1.-" evidence="1"/>
<dbReference type="EMBL" id="AM933173">
    <property type="protein sequence ID" value="CAR38185.1"/>
    <property type="status" value="ALT_INIT"/>
    <property type="molecule type" value="Genomic_DNA"/>
</dbReference>
<dbReference type="SMR" id="B5RCF1"/>
<dbReference type="KEGG" id="seg:SG2355"/>
<dbReference type="HOGENOM" id="CLU_015134_3_2_6"/>
<dbReference type="Proteomes" id="UP000008321">
    <property type="component" value="Chromosome"/>
</dbReference>
<dbReference type="GO" id="GO:0030964">
    <property type="term" value="C:NADH dehydrogenase complex"/>
    <property type="evidence" value="ECO:0007669"/>
    <property type="project" value="InterPro"/>
</dbReference>
<dbReference type="GO" id="GO:0005886">
    <property type="term" value="C:plasma membrane"/>
    <property type="evidence" value="ECO:0007669"/>
    <property type="project" value="UniProtKB-SubCell"/>
</dbReference>
<dbReference type="GO" id="GO:0051287">
    <property type="term" value="F:NAD binding"/>
    <property type="evidence" value="ECO:0007669"/>
    <property type="project" value="InterPro"/>
</dbReference>
<dbReference type="GO" id="GO:0008137">
    <property type="term" value="F:NADH dehydrogenase (ubiquinone) activity"/>
    <property type="evidence" value="ECO:0007669"/>
    <property type="project" value="InterPro"/>
</dbReference>
<dbReference type="GO" id="GO:0050136">
    <property type="term" value="F:NADH:ubiquinone reductase (non-electrogenic) activity"/>
    <property type="evidence" value="ECO:0007669"/>
    <property type="project" value="UniProtKB-UniRule"/>
</dbReference>
<dbReference type="GO" id="GO:0048038">
    <property type="term" value="F:quinone binding"/>
    <property type="evidence" value="ECO:0007669"/>
    <property type="project" value="UniProtKB-KW"/>
</dbReference>
<dbReference type="FunFam" id="1.10.645.10:FF:000001">
    <property type="entry name" value="NADH-quinone oxidoreductase subunit C/D"/>
    <property type="match status" value="1"/>
</dbReference>
<dbReference type="FunFam" id="3.30.460.80:FF:000001">
    <property type="entry name" value="NADH-quinone oxidoreductase subunit C/D"/>
    <property type="match status" value="1"/>
</dbReference>
<dbReference type="Gene3D" id="1.10.645.10">
    <property type="entry name" value="Cytochrome-c3 Hydrogenase, chain B"/>
    <property type="match status" value="1"/>
</dbReference>
<dbReference type="Gene3D" id="3.30.460.80">
    <property type="entry name" value="NADH:ubiquinone oxidoreductase, 30kDa subunit"/>
    <property type="match status" value="1"/>
</dbReference>
<dbReference type="HAMAP" id="MF_01359">
    <property type="entry name" value="NDH1_NuoCD_1"/>
    <property type="match status" value="1"/>
</dbReference>
<dbReference type="HAMAP" id="MF_01358">
    <property type="entry name" value="NDH1_NuoD"/>
    <property type="match status" value="1"/>
</dbReference>
<dbReference type="InterPro" id="IPR010218">
    <property type="entry name" value="NADH_DH_suC"/>
</dbReference>
<dbReference type="InterPro" id="IPR023062">
    <property type="entry name" value="NADH_DH_suCD"/>
</dbReference>
<dbReference type="InterPro" id="IPR001135">
    <property type="entry name" value="NADH_Q_OxRdtase_suD"/>
</dbReference>
<dbReference type="InterPro" id="IPR037232">
    <property type="entry name" value="NADH_quin_OxRdtase_su_C/D-like"/>
</dbReference>
<dbReference type="InterPro" id="IPR001268">
    <property type="entry name" value="NADH_UbQ_OxRdtase_30kDa_su"/>
</dbReference>
<dbReference type="InterPro" id="IPR014029">
    <property type="entry name" value="NADH_UbQ_OxRdtase_49kDa_CS"/>
</dbReference>
<dbReference type="InterPro" id="IPR022885">
    <property type="entry name" value="NDH1_su_D/H"/>
</dbReference>
<dbReference type="InterPro" id="IPR029014">
    <property type="entry name" value="NiFe-Hase_large"/>
</dbReference>
<dbReference type="NCBIfam" id="TIGR01961">
    <property type="entry name" value="NuoC_fam"/>
    <property type="match status" value="1"/>
</dbReference>
<dbReference type="NCBIfam" id="TIGR01962">
    <property type="entry name" value="NuoD"/>
    <property type="match status" value="1"/>
</dbReference>
<dbReference type="NCBIfam" id="NF004739">
    <property type="entry name" value="PRK06075.1"/>
    <property type="match status" value="1"/>
</dbReference>
<dbReference type="NCBIfam" id="NF008728">
    <property type="entry name" value="PRK11742.1"/>
    <property type="match status" value="1"/>
</dbReference>
<dbReference type="PANTHER" id="PTHR11993:SF45">
    <property type="entry name" value="NADH-QUINONE OXIDOREDUCTASE SUBUNIT C_D"/>
    <property type="match status" value="1"/>
</dbReference>
<dbReference type="PANTHER" id="PTHR11993">
    <property type="entry name" value="NADH-UBIQUINONE OXIDOREDUCTASE 49 KDA SUBUNIT"/>
    <property type="match status" value="1"/>
</dbReference>
<dbReference type="Pfam" id="PF00329">
    <property type="entry name" value="Complex1_30kDa"/>
    <property type="match status" value="1"/>
</dbReference>
<dbReference type="Pfam" id="PF00346">
    <property type="entry name" value="Complex1_49kDa"/>
    <property type="match status" value="1"/>
</dbReference>
<dbReference type="SUPFAM" id="SSF56762">
    <property type="entry name" value="HydB/Nqo4-like"/>
    <property type="match status" value="1"/>
</dbReference>
<dbReference type="SUPFAM" id="SSF143243">
    <property type="entry name" value="Nqo5-like"/>
    <property type="match status" value="1"/>
</dbReference>
<dbReference type="PROSITE" id="PS00535">
    <property type="entry name" value="COMPLEX1_49K"/>
    <property type="match status" value="1"/>
</dbReference>
<accession>B5RCF1</accession>
<proteinExistence type="inferred from homology"/>
<sequence length="596" mass="68402">MTDLTAQDAAWSTRDHLDDPVIGELRNRFGPDAFTVQATRTGIPVVWVKREQLLEVGDFLKKLPKPYVMLFDLHGMDERLRTHRDGLPAADFSVFYHLISIERNRDIMLKVALSENDLRVPTFTKLFPNANWYERETWEMFGIDIEGHPHLTRIMMPQTWEGHPLRKDYPARATEFDPFELTKAKQDLEMEALTFKPEDWGMKRGTDNEDFMFLNLGPNHPSAHGAFRIILQLDGEEIVDCVPDIGYHHRGAEKMGERQSWHSYIPYTDRIEYLGGCVNEMPYVLAVEKLAGITVPDRVNVIRVMLSELFRINSHLLYISTFIQDVGAMTPVFFAFTDRQKIYDLVEAITGFRMHPAWFRIGGVAHDLPRGWDRLLREFLEWMPKRLDSYEKAALRNTILKGRSQGVAAYGAKEALEWGTTGAGLRATGIDFDVRKWRPYSGYENFDFEVPVGGGVSDCYTRVMLKVEELRQSLRILQQCLDNMPEGPFKADHPLTTPPPKERTLQHIETLITHFLQVSWGPVMPAQESFQMVEATKGINSYYLTSDGSTMSYRTRVRTPSFAHLQQIPSAIRGSLVSDLIVYLGSIDFVMSDVDR</sequence>
<name>NUOCD_SALG2</name>
<comment type="function">
    <text evidence="1">NDH-1 shuttles electrons from NADH, via FMN and iron-sulfur (Fe-S) centers, to quinones in the respiratory chain. The immediate electron acceptor for the enzyme in this species is believed to be ubiquinone. Couples the redox reaction to proton translocation (for every two electrons transferred, four hydrogen ions are translocated across the cytoplasmic membrane), and thus conserves the redox energy in a proton gradient.</text>
</comment>
<comment type="catalytic activity">
    <reaction evidence="1">
        <text>a quinone + NADH + 5 H(+)(in) = a quinol + NAD(+) + 4 H(+)(out)</text>
        <dbReference type="Rhea" id="RHEA:57888"/>
        <dbReference type="ChEBI" id="CHEBI:15378"/>
        <dbReference type="ChEBI" id="CHEBI:24646"/>
        <dbReference type="ChEBI" id="CHEBI:57540"/>
        <dbReference type="ChEBI" id="CHEBI:57945"/>
        <dbReference type="ChEBI" id="CHEBI:132124"/>
    </reaction>
</comment>
<comment type="subunit">
    <text evidence="1">NDH-1 is composed of 13 different subunits. Subunits NuoB, CD, E, F, and G constitute the peripheral sector of the complex.</text>
</comment>
<comment type="subcellular location">
    <subcellularLocation>
        <location evidence="1">Cell inner membrane</location>
        <topology evidence="1">Peripheral membrane protein</topology>
        <orientation evidence="1">Cytoplasmic side</orientation>
    </subcellularLocation>
</comment>
<comment type="similarity">
    <text evidence="1">In the N-terminal section; belongs to the complex I 30 kDa subunit family.</text>
</comment>
<comment type="similarity">
    <text evidence="1">In the C-terminal section; belongs to the complex I 49 kDa subunit family.</text>
</comment>
<comment type="sequence caution" evidence="2">
    <conflict type="erroneous initiation">
        <sequence resource="EMBL-CDS" id="CAR38185"/>
    </conflict>
</comment>
<reference key="1">
    <citation type="journal article" date="2008" name="Genome Res.">
        <title>Comparative genome analysis of Salmonella enteritidis PT4 and Salmonella gallinarum 287/91 provides insights into evolutionary and host adaptation pathways.</title>
        <authorList>
            <person name="Thomson N.R."/>
            <person name="Clayton D.J."/>
            <person name="Windhorst D."/>
            <person name="Vernikos G."/>
            <person name="Davidson S."/>
            <person name="Churcher C."/>
            <person name="Quail M.A."/>
            <person name="Stevens M."/>
            <person name="Jones M.A."/>
            <person name="Watson M."/>
            <person name="Barron A."/>
            <person name="Layton A."/>
            <person name="Pickard D."/>
            <person name="Kingsley R.A."/>
            <person name="Bignell A."/>
            <person name="Clark L."/>
            <person name="Harris B."/>
            <person name="Ormond D."/>
            <person name="Abdellah Z."/>
            <person name="Brooks K."/>
            <person name="Cherevach I."/>
            <person name="Chillingworth T."/>
            <person name="Woodward J."/>
            <person name="Norberczak H."/>
            <person name="Lord A."/>
            <person name="Arrowsmith C."/>
            <person name="Jagels K."/>
            <person name="Moule S."/>
            <person name="Mungall K."/>
            <person name="Saunders M."/>
            <person name="Whitehead S."/>
            <person name="Chabalgoity J.A."/>
            <person name="Maskell D."/>
            <person name="Humphreys T."/>
            <person name="Roberts M."/>
            <person name="Barrow P.A."/>
            <person name="Dougan G."/>
            <person name="Parkhill J."/>
        </authorList>
    </citation>
    <scope>NUCLEOTIDE SEQUENCE [LARGE SCALE GENOMIC DNA]</scope>
    <source>
        <strain>287/91 / NCTC 13346</strain>
    </source>
</reference>
<protein>
    <recommendedName>
        <fullName evidence="1">NADH-quinone oxidoreductase subunit C/D</fullName>
        <ecNumber evidence="1">7.1.1.-</ecNumber>
    </recommendedName>
    <alternativeName>
        <fullName evidence="1">NADH dehydrogenase I subunit C/D</fullName>
    </alternativeName>
    <alternativeName>
        <fullName evidence="1">NDH-1 subunit C/D</fullName>
    </alternativeName>
</protein>
<feature type="chain" id="PRO_0000358685" description="NADH-quinone oxidoreductase subunit C/D">
    <location>
        <begin position="1"/>
        <end position="596"/>
    </location>
</feature>
<feature type="region of interest" description="NADH dehydrogenase I subunit C" evidence="1">
    <location>
        <begin position="1"/>
        <end position="186"/>
    </location>
</feature>
<feature type="region of interest" description="NADH dehydrogenase I subunit D" evidence="1">
    <location>
        <begin position="210"/>
        <end position="596"/>
    </location>
</feature>
<keyword id="KW-0997">Cell inner membrane</keyword>
<keyword id="KW-1003">Cell membrane</keyword>
<keyword id="KW-0472">Membrane</keyword>
<keyword id="KW-0511">Multifunctional enzyme</keyword>
<keyword id="KW-0520">NAD</keyword>
<keyword id="KW-0874">Quinone</keyword>
<keyword id="KW-1278">Translocase</keyword>
<keyword id="KW-0813">Transport</keyword>
<keyword id="KW-0830">Ubiquinone</keyword>
<evidence type="ECO:0000255" key="1">
    <source>
        <dbReference type="HAMAP-Rule" id="MF_01359"/>
    </source>
</evidence>
<evidence type="ECO:0000305" key="2"/>
<organism>
    <name type="scientific">Salmonella gallinarum (strain 287/91 / NCTC 13346)</name>
    <dbReference type="NCBI Taxonomy" id="550538"/>
    <lineage>
        <taxon>Bacteria</taxon>
        <taxon>Pseudomonadati</taxon>
        <taxon>Pseudomonadota</taxon>
        <taxon>Gammaproteobacteria</taxon>
        <taxon>Enterobacterales</taxon>
        <taxon>Enterobacteriaceae</taxon>
        <taxon>Salmonella</taxon>
    </lineage>
</organism>
<gene>
    <name evidence="1" type="primary">nuoC</name>
    <name evidence="1" type="synonym">nuoCD</name>
    <name evidence="1" type="synonym">nuoD</name>
    <name type="ordered locus">SG2355</name>
</gene>